<keyword id="KW-0004">4Fe-4S</keyword>
<keyword id="KW-0408">Iron</keyword>
<keyword id="KW-0411">Iron-sulfur</keyword>
<keyword id="KW-0456">Lyase</keyword>
<keyword id="KW-0479">Metal-binding</keyword>
<keyword id="KW-0949">S-adenosyl-L-methionine</keyword>
<keyword id="KW-0784">Thiamine biosynthesis</keyword>
<keyword id="KW-0862">Zinc</keyword>
<accession>B4S2W4</accession>
<accession>F2G2T3</accession>
<protein>
    <recommendedName>
        <fullName evidence="1">Phosphomethylpyrimidine synthase</fullName>
        <ecNumber evidence="1">4.1.99.17</ecNumber>
    </recommendedName>
    <alternativeName>
        <fullName evidence="1">Hydroxymethylpyrimidine phosphate synthase</fullName>
        <shortName evidence="1">HMP-P synthase</shortName>
        <shortName evidence="1">HMP-phosphate synthase</shortName>
        <shortName evidence="1">HMPP synthase</shortName>
    </alternativeName>
    <alternativeName>
        <fullName evidence="1">Thiamine biosynthesis protein ThiC</fullName>
    </alternativeName>
</protein>
<organism>
    <name type="scientific">Alteromonas mediterranea (strain DSM 17117 / CIP 110805 / LMG 28347 / Deep ecotype)</name>
    <dbReference type="NCBI Taxonomy" id="1774373"/>
    <lineage>
        <taxon>Bacteria</taxon>
        <taxon>Pseudomonadati</taxon>
        <taxon>Pseudomonadota</taxon>
        <taxon>Gammaproteobacteria</taxon>
        <taxon>Alteromonadales</taxon>
        <taxon>Alteromonadaceae</taxon>
        <taxon>Alteromonas/Salinimonas group</taxon>
        <taxon>Alteromonas</taxon>
    </lineage>
</organism>
<proteinExistence type="inferred from homology"/>
<feature type="chain" id="PRO_1000198043" description="Phosphomethylpyrimidine synthase">
    <location>
        <begin position="1"/>
        <end position="642"/>
    </location>
</feature>
<feature type="binding site" evidence="1">
    <location>
        <position position="235"/>
    </location>
    <ligand>
        <name>substrate</name>
    </ligand>
</feature>
<feature type="binding site" evidence="1">
    <location>
        <position position="264"/>
    </location>
    <ligand>
        <name>substrate</name>
    </ligand>
</feature>
<feature type="binding site" evidence="1">
    <location>
        <position position="293"/>
    </location>
    <ligand>
        <name>substrate</name>
    </ligand>
</feature>
<feature type="binding site" evidence="1">
    <location>
        <position position="329"/>
    </location>
    <ligand>
        <name>substrate</name>
    </ligand>
</feature>
<feature type="binding site" evidence="1">
    <location>
        <begin position="349"/>
        <end position="351"/>
    </location>
    <ligand>
        <name>substrate</name>
    </ligand>
</feature>
<feature type="binding site" evidence="1">
    <location>
        <begin position="390"/>
        <end position="393"/>
    </location>
    <ligand>
        <name>substrate</name>
    </ligand>
</feature>
<feature type="binding site" evidence="1">
    <location>
        <position position="429"/>
    </location>
    <ligand>
        <name>substrate</name>
    </ligand>
</feature>
<feature type="binding site" evidence="1">
    <location>
        <position position="433"/>
    </location>
    <ligand>
        <name>Zn(2+)</name>
        <dbReference type="ChEBI" id="CHEBI:29105"/>
    </ligand>
</feature>
<feature type="binding site" evidence="1">
    <location>
        <position position="456"/>
    </location>
    <ligand>
        <name>substrate</name>
    </ligand>
</feature>
<feature type="binding site" evidence="1">
    <location>
        <position position="497"/>
    </location>
    <ligand>
        <name>Zn(2+)</name>
        <dbReference type="ChEBI" id="CHEBI:29105"/>
    </ligand>
</feature>
<feature type="binding site" evidence="1">
    <location>
        <position position="577"/>
    </location>
    <ligand>
        <name>[4Fe-4S] cluster</name>
        <dbReference type="ChEBI" id="CHEBI:49883"/>
        <note>4Fe-4S-S-AdoMet</note>
    </ligand>
</feature>
<feature type="binding site" evidence="1">
    <location>
        <position position="580"/>
    </location>
    <ligand>
        <name>[4Fe-4S] cluster</name>
        <dbReference type="ChEBI" id="CHEBI:49883"/>
        <note>4Fe-4S-S-AdoMet</note>
    </ligand>
</feature>
<feature type="binding site" evidence="1">
    <location>
        <position position="585"/>
    </location>
    <ligand>
        <name>[4Fe-4S] cluster</name>
        <dbReference type="ChEBI" id="CHEBI:49883"/>
        <note>4Fe-4S-S-AdoMet</note>
    </ligand>
</feature>
<evidence type="ECO:0000255" key="1">
    <source>
        <dbReference type="HAMAP-Rule" id="MF_00089"/>
    </source>
</evidence>
<name>THIC_ALTMD</name>
<sequence>MSNRREQRQQAQQFINELAGEAYPNSTRHYESGSRDDIRVAMRLIHQHDSLVGGTEDNPILEPNPPIPVYDTSGPYGDPKENIDVHKGLSPLRKTWIEERSDTRELDGVSSSFAKERENDIFTEDFRFIRSRKPLKAKAGKNVTQLHYARQGVITPEMEYIAIRENMGRQAIKDAELTQQHKGEHFGANLPETITPEFVRQEVAAGRAIIPCNINHPELEPMIIGRNFLVKINANIGNSAVTSSIEEEVEKLVWSTRWGADTIMDLSTGRNIHETREWLLRNSPVPLGTVPIYQALEKVNGVAEDLTWEMFKDTLIEQAEQGVDYFTIHAGVLLEYVHLTAKRVTGIVSRGGSIMAKWCLSHHQQSFLYEHFNDICEICAKYDVALSLGDGLRPGSVADANDDAQFSELRTLGELTKIAWEYDVQVMIEGPGHVPMHMIKENMEEQLKHCHEAPFYTLGPLTTDIAPGYDHFTSGIGAAMIGWYGCAMLCYVTPKEHLGLPNKEDVKQGLITYKIAAHAADLAKGHPGAQIRDNAMSKARFEFRWEDQFNLALDPHTARAYHDETLPQASGKVAHFCSMCGPKFCSMKISQEVRDVAKQAENLAPAQAAEKEKEKGMKDMANAFNKSGAELYHTADSKVELP</sequence>
<gene>
    <name evidence="1" type="primary">thiC</name>
    <name type="ordered locus">MADE_1000720</name>
</gene>
<dbReference type="EC" id="4.1.99.17" evidence="1"/>
<dbReference type="EMBL" id="CP001103">
    <property type="protein sequence ID" value="AEA96293.1"/>
    <property type="molecule type" value="Genomic_DNA"/>
</dbReference>
<dbReference type="RefSeq" id="WP_012516667.1">
    <property type="nucleotide sequence ID" value="NC_011138.3"/>
</dbReference>
<dbReference type="SMR" id="B4S2W4"/>
<dbReference type="KEGG" id="amc:MADE_1000720"/>
<dbReference type="PATRIC" id="fig|314275.5.peg.149"/>
<dbReference type="HOGENOM" id="CLU_013181_2_1_6"/>
<dbReference type="UniPathway" id="UPA00060"/>
<dbReference type="Proteomes" id="UP000001870">
    <property type="component" value="Chromosome"/>
</dbReference>
<dbReference type="GO" id="GO:0005829">
    <property type="term" value="C:cytosol"/>
    <property type="evidence" value="ECO:0007669"/>
    <property type="project" value="TreeGrafter"/>
</dbReference>
<dbReference type="GO" id="GO:0051539">
    <property type="term" value="F:4 iron, 4 sulfur cluster binding"/>
    <property type="evidence" value="ECO:0007669"/>
    <property type="project" value="UniProtKB-KW"/>
</dbReference>
<dbReference type="GO" id="GO:0016830">
    <property type="term" value="F:carbon-carbon lyase activity"/>
    <property type="evidence" value="ECO:0007669"/>
    <property type="project" value="InterPro"/>
</dbReference>
<dbReference type="GO" id="GO:0008270">
    <property type="term" value="F:zinc ion binding"/>
    <property type="evidence" value="ECO:0007669"/>
    <property type="project" value="UniProtKB-UniRule"/>
</dbReference>
<dbReference type="GO" id="GO:0009228">
    <property type="term" value="P:thiamine biosynthetic process"/>
    <property type="evidence" value="ECO:0007669"/>
    <property type="project" value="UniProtKB-KW"/>
</dbReference>
<dbReference type="GO" id="GO:0009229">
    <property type="term" value="P:thiamine diphosphate biosynthetic process"/>
    <property type="evidence" value="ECO:0007669"/>
    <property type="project" value="UniProtKB-UniRule"/>
</dbReference>
<dbReference type="FunFam" id="3.20.20.540:FF:000001">
    <property type="entry name" value="Phosphomethylpyrimidine synthase"/>
    <property type="match status" value="1"/>
</dbReference>
<dbReference type="Gene3D" id="6.10.250.620">
    <property type="match status" value="1"/>
</dbReference>
<dbReference type="Gene3D" id="3.20.20.540">
    <property type="entry name" value="Radical SAM ThiC family, central domain"/>
    <property type="match status" value="1"/>
</dbReference>
<dbReference type="HAMAP" id="MF_00089">
    <property type="entry name" value="ThiC"/>
    <property type="match status" value="1"/>
</dbReference>
<dbReference type="InterPro" id="IPR037509">
    <property type="entry name" value="ThiC"/>
</dbReference>
<dbReference type="InterPro" id="IPR025747">
    <property type="entry name" value="ThiC-associated_dom"/>
</dbReference>
<dbReference type="InterPro" id="IPR038521">
    <property type="entry name" value="ThiC/Bza_core_dom"/>
</dbReference>
<dbReference type="InterPro" id="IPR002817">
    <property type="entry name" value="ThiC/BzaA/B"/>
</dbReference>
<dbReference type="NCBIfam" id="NF006763">
    <property type="entry name" value="PRK09284.1"/>
    <property type="match status" value="1"/>
</dbReference>
<dbReference type="NCBIfam" id="NF009895">
    <property type="entry name" value="PRK13352.1"/>
    <property type="match status" value="1"/>
</dbReference>
<dbReference type="NCBIfam" id="TIGR00190">
    <property type="entry name" value="thiC"/>
    <property type="match status" value="1"/>
</dbReference>
<dbReference type="PANTHER" id="PTHR30557:SF1">
    <property type="entry name" value="PHOSPHOMETHYLPYRIMIDINE SYNTHASE, CHLOROPLASTIC"/>
    <property type="match status" value="1"/>
</dbReference>
<dbReference type="PANTHER" id="PTHR30557">
    <property type="entry name" value="THIAMINE BIOSYNTHESIS PROTEIN THIC"/>
    <property type="match status" value="1"/>
</dbReference>
<dbReference type="Pfam" id="PF13667">
    <property type="entry name" value="ThiC-associated"/>
    <property type="match status" value="1"/>
</dbReference>
<dbReference type="Pfam" id="PF01964">
    <property type="entry name" value="ThiC_Rad_SAM"/>
    <property type="match status" value="1"/>
</dbReference>
<dbReference type="SFLD" id="SFLDF00407">
    <property type="entry name" value="phosphomethylpyrimidine_syntha"/>
    <property type="match status" value="1"/>
</dbReference>
<dbReference type="SFLD" id="SFLDG01114">
    <property type="entry name" value="phosphomethylpyrimidine_syntha"/>
    <property type="match status" value="1"/>
</dbReference>
<dbReference type="SFLD" id="SFLDS00113">
    <property type="entry name" value="Radical_SAM_Phosphomethylpyrim"/>
    <property type="match status" value="1"/>
</dbReference>
<reference key="1">
    <citation type="journal article" date="2008" name="ISME J.">
        <title>Comparative genomics of two ecotypes of the marine planktonic copiotroph Alteromonas macleodii suggests alternative lifestyles associated with different kinds of particulate organic matter.</title>
        <authorList>
            <person name="Ivars-Martinez E."/>
            <person name="Martin-Cuadrado A.-B."/>
            <person name="D'Auria G."/>
            <person name="Mira A."/>
            <person name="Ferriera S."/>
            <person name="Johnson J."/>
            <person name="Friedman R."/>
            <person name="Rodriguez-Valera F."/>
        </authorList>
    </citation>
    <scope>NUCLEOTIDE SEQUENCE [LARGE SCALE GENOMIC DNA]</scope>
    <source>
        <strain>DSM 17117 / CIP 110805 / LMG 28347 / Deep ecotype</strain>
    </source>
</reference>
<comment type="function">
    <text evidence="1">Catalyzes the synthesis of the hydroxymethylpyrimidine phosphate (HMP-P) moiety of thiamine from aminoimidazole ribotide (AIR) in a radical S-adenosyl-L-methionine (SAM)-dependent reaction.</text>
</comment>
<comment type="catalytic activity">
    <reaction evidence="1">
        <text>5-amino-1-(5-phospho-beta-D-ribosyl)imidazole + S-adenosyl-L-methionine = 4-amino-2-methyl-5-(phosphooxymethyl)pyrimidine + CO + 5'-deoxyadenosine + formate + L-methionine + 3 H(+)</text>
        <dbReference type="Rhea" id="RHEA:24840"/>
        <dbReference type="ChEBI" id="CHEBI:15378"/>
        <dbReference type="ChEBI" id="CHEBI:15740"/>
        <dbReference type="ChEBI" id="CHEBI:17245"/>
        <dbReference type="ChEBI" id="CHEBI:17319"/>
        <dbReference type="ChEBI" id="CHEBI:57844"/>
        <dbReference type="ChEBI" id="CHEBI:58354"/>
        <dbReference type="ChEBI" id="CHEBI:59789"/>
        <dbReference type="ChEBI" id="CHEBI:137981"/>
        <dbReference type="EC" id="4.1.99.17"/>
    </reaction>
</comment>
<comment type="cofactor">
    <cofactor evidence="1">
        <name>[4Fe-4S] cluster</name>
        <dbReference type="ChEBI" id="CHEBI:49883"/>
    </cofactor>
    <text evidence="1">Binds 1 [4Fe-4S] cluster per subunit. The cluster is coordinated with 3 cysteines and an exchangeable S-adenosyl-L-methionine.</text>
</comment>
<comment type="pathway">
    <text evidence="1">Cofactor biosynthesis; thiamine diphosphate biosynthesis.</text>
</comment>
<comment type="subunit">
    <text evidence="1">Homodimer.</text>
</comment>
<comment type="similarity">
    <text evidence="1">Belongs to the ThiC family.</text>
</comment>